<dbReference type="EC" id="2.7.1.130" evidence="1"/>
<dbReference type="EMBL" id="CP001138">
    <property type="protein sequence ID" value="ACH51660.1"/>
    <property type="molecule type" value="Genomic_DNA"/>
</dbReference>
<dbReference type="RefSeq" id="WP_000561696.1">
    <property type="nucleotide sequence ID" value="NC_011149.1"/>
</dbReference>
<dbReference type="SMR" id="B5F168"/>
<dbReference type="KEGG" id="sea:SeAg_B0991"/>
<dbReference type="HOGENOM" id="CLU_038816_2_0_6"/>
<dbReference type="UniPathway" id="UPA00359">
    <property type="reaction ID" value="UER00482"/>
</dbReference>
<dbReference type="Proteomes" id="UP000008819">
    <property type="component" value="Chromosome"/>
</dbReference>
<dbReference type="GO" id="GO:0005886">
    <property type="term" value="C:plasma membrane"/>
    <property type="evidence" value="ECO:0007669"/>
    <property type="project" value="TreeGrafter"/>
</dbReference>
<dbReference type="GO" id="GO:0005524">
    <property type="term" value="F:ATP binding"/>
    <property type="evidence" value="ECO:0007669"/>
    <property type="project" value="UniProtKB-UniRule"/>
</dbReference>
<dbReference type="GO" id="GO:0009029">
    <property type="term" value="F:tetraacyldisaccharide 4'-kinase activity"/>
    <property type="evidence" value="ECO:0007669"/>
    <property type="project" value="UniProtKB-UniRule"/>
</dbReference>
<dbReference type="GO" id="GO:0009245">
    <property type="term" value="P:lipid A biosynthetic process"/>
    <property type="evidence" value="ECO:0007669"/>
    <property type="project" value="UniProtKB-UniRule"/>
</dbReference>
<dbReference type="GO" id="GO:0009244">
    <property type="term" value="P:lipopolysaccharide core region biosynthetic process"/>
    <property type="evidence" value="ECO:0007669"/>
    <property type="project" value="TreeGrafter"/>
</dbReference>
<dbReference type="HAMAP" id="MF_00409">
    <property type="entry name" value="LpxK"/>
    <property type="match status" value="1"/>
</dbReference>
<dbReference type="InterPro" id="IPR003758">
    <property type="entry name" value="LpxK"/>
</dbReference>
<dbReference type="InterPro" id="IPR027417">
    <property type="entry name" value="P-loop_NTPase"/>
</dbReference>
<dbReference type="NCBIfam" id="TIGR00682">
    <property type="entry name" value="lpxK"/>
    <property type="match status" value="1"/>
</dbReference>
<dbReference type="PANTHER" id="PTHR42724">
    <property type="entry name" value="TETRAACYLDISACCHARIDE 4'-KINASE"/>
    <property type="match status" value="1"/>
</dbReference>
<dbReference type="PANTHER" id="PTHR42724:SF1">
    <property type="entry name" value="TETRAACYLDISACCHARIDE 4'-KINASE, MITOCHONDRIAL-RELATED"/>
    <property type="match status" value="1"/>
</dbReference>
<dbReference type="Pfam" id="PF02606">
    <property type="entry name" value="LpxK"/>
    <property type="match status" value="1"/>
</dbReference>
<dbReference type="SUPFAM" id="SSF52540">
    <property type="entry name" value="P-loop containing nucleoside triphosphate hydrolases"/>
    <property type="match status" value="1"/>
</dbReference>
<accession>B5F168</accession>
<proteinExistence type="inferred from homology"/>
<sequence length="325" mass="34942">MIARIWSGESPLWRLLLPLSWLYGLVSGAIRLSYKLGLKRAWRAPVPVVVVGNLTAGGNGKTPVVIWLVEKLQQRGVRVGVVSRGYGGKAAAYPLLLTPETTTAEAGDEPVLIYQRTGAPVAVAPERAAAVKAILAAHNVQIIITDDGLQHYRLARDIEIVVIDGVRRFGNGWWLPAGPMRERASRLKTVDAAIVNGGVARAGEIPMQLAPGLAVNLRTGARCDVAQLSNIVAMAGIGHPPRFFATLEACGAHPQKCVPLADHQTLAPADVQALVGEGQTLVMTEKDAVKCRAFAEDNWWFLPVDAHLSGEQPDKLLQHITSLVR</sequence>
<gene>
    <name evidence="1" type="primary">lpxK</name>
    <name type="ordered locus">SeAg_B0991</name>
</gene>
<feature type="chain" id="PRO_1000123735" description="Tetraacyldisaccharide 4'-kinase">
    <location>
        <begin position="1"/>
        <end position="325"/>
    </location>
</feature>
<feature type="binding site" evidence="1">
    <location>
        <begin position="55"/>
        <end position="62"/>
    </location>
    <ligand>
        <name>ATP</name>
        <dbReference type="ChEBI" id="CHEBI:30616"/>
    </ligand>
</feature>
<keyword id="KW-0067">ATP-binding</keyword>
<keyword id="KW-0418">Kinase</keyword>
<keyword id="KW-0441">Lipid A biosynthesis</keyword>
<keyword id="KW-0444">Lipid biosynthesis</keyword>
<keyword id="KW-0443">Lipid metabolism</keyword>
<keyword id="KW-0547">Nucleotide-binding</keyword>
<keyword id="KW-0808">Transferase</keyword>
<reference key="1">
    <citation type="journal article" date="2011" name="J. Bacteriol.">
        <title>Comparative genomics of 28 Salmonella enterica isolates: evidence for CRISPR-mediated adaptive sublineage evolution.</title>
        <authorList>
            <person name="Fricke W.F."/>
            <person name="Mammel M.K."/>
            <person name="McDermott P.F."/>
            <person name="Tartera C."/>
            <person name="White D.G."/>
            <person name="Leclerc J.E."/>
            <person name="Ravel J."/>
            <person name="Cebula T.A."/>
        </authorList>
    </citation>
    <scope>NUCLEOTIDE SEQUENCE [LARGE SCALE GENOMIC DNA]</scope>
    <source>
        <strain>SL483</strain>
    </source>
</reference>
<protein>
    <recommendedName>
        <fullName evidence="1">Tetraacyldisaccharide 4'-kinase</fullName>
        <ecNumber evidence="1">2.7.1.130</ecNumber>
    </recommendedName>
    <alternativeName>
        <fullName evidence="1">Lipid A 4'-kinase</fullName>
    </alternativeName>
</protein>
<evidence type="ECO:0000255" key="1">
    <source>
        <dbReference type="HAMAP-Rule" id="MF_00409"/>
    </source>
</evidence>
<organism>
    <name type="scientific">Salmonella agona (strain SL483)</name>
    <dbReference type="NCBI Taxonomy" id="454166"/>
    <lineage>
        <taxon>Bacteria</taxon>
        <taxon>Pseudomonadati</taxon>
        <taxon>Pseudomonadota</taxon>
        <taxon>Gammaproteobacteria</taxon>
        <taxon>Enterobacterales</taxon>
        <taxon>Enterobacteriaceae</taxon>
        <taxon>Salmonella</taxon>
    </lineage>
</organism>
<comment type="function">
    <text evidence="1">Transfers the gamma-phosphate of ATP to the 4'-position of a tetraacyldisaccharide 1-phosphate intermediate (termed DS-1-P) to form tetraacyldisaccharide 1,4'-bis-phosphate (lipid IVA).</text>
</comment>
<comment type="catalytic activity">
    <reaction evidence="1">
        <text>a lipid A disaccharide + ATP = a lipid IVA + ADP + H(+)</text>
        <dbReference type="Rhea" id="RHEA:67840"/>
        <dbReference type="ChEBI" id="CHEBI:15378"/>
        <dbReference type="ChEBI" id="CHEBI:30616"/>
        <dbReference type="ChEBI" id="CHEBI:176343"/>
        <dbReference type="ChEBI" id="CHEBI:176425"/>
        <dbReference type="ChEBI" id="CHEBI:456216"/>
        <dbReference type="EC" id="2.7.1.130"/>
    </reaction>
</comment>
<comment type="pathway">
    <text evidence="1">Glycolipid biosynthesis; lipid IV(A) biosynthesis; lipid IV(A) from (3R)-3-hydroxytetradecanoyl-[acyl-carrier-protein] and UDP-N-acetyl-alpha-D-glucosamine: step 6/6.</text>
</comment>
<comment type="similarity">
    <text evidence="1">Belongs to the LpxK family.</text>
</comment>
<name>LPXK_SALA4</name>